<reference key="1">
    <citation type="submission" date="2006-11" db="EMBL/GenBank/DDBJ databases">
        <title>Cytochrome P450-dependent monooxygenases of the furanocoumarin biosynthesis from Ammi majus L.</title>
        <authorList>
            <person name="Kellner S."/>
            <person name="Matern U."/>
        </authorList>
    </citation>
    <scope>NUCLEOTIDE SEQUENCE [GENOMIC DNA]</scope>
</reference>
<reference key="2">
    <citation type="journal article" date="2018" name="Front. Plant Sci.">
        <title>The CYP71AZ P450 subfamily: A driving factor for the diversification of coumarin biosynthesis in apiaceous plants.</title>
        <authorList>
            <person name="Krieger C."/>
            <person name="Roselli S."/>
            <person name="Kellner-Thielmann S."/>
            <person name="Galati G."/>
            <person name="Schneider B."/>
            <person name="Grosjean J."/>
            <person name="Olry A."/>
            <person name="Ritchie D."/>
            <person name="Matern U."/>
            <person name="Bourgaud F."/>
            <person name="Hehn A."/>
        </authorList>
    </citation>
    <scope>FUNCTION</scope>
    <scope>CATALYTIC ACTIVITY</scope>
    <scope>BIOPHYSICOCHEMICAL PROPERTIES</scope>
    <scope>REVIEW</scope>
    <scope>PATHWAY</scope>
</reference>
<sequence>MQMDAVVILLILAFPIASVYVLFYHKKRVDGLSEPPGPPGLPFIGNFYQLYKAPCIHEYLCTLSKRYGSLMTLRMGSVPILVVSSPKMAKEVLKTQDLAYCSRPMMTGMQKLSYNGLDVAFSPYSEHWRQVRKFCTLELFTQKRAQIDFRHVHEQEVSRMIARLSETAAASKDVNAFECFSNLATSIISRVAFGKRHDEDGIGKERLQRMLSELDTMLSVYFVSDFFPMFGWIDSLTGMRARLDRTFKEMDMFYEELIDDHLKPDRPESLTEDIIDVMLKNKGCSSSSLTKDTMKAILLNVFNGGTGTSASLLVWAMTALMRNRGVMKKVQEEIRSVIGKKGNVDEDDIQNLPYLRAVVKETMRLYPTGALLIPRKTIESSIIGEDKDHMYMIKPKTLVYVSMWAIGRDPEIWKNPMKFVPERFLERHDINYQGQQFEYIPFGAGRRICPGIHLGLTTVELALANLLYTFNWEPPVGTRFEDINDETVNGITLQKKNALYIRPKTYMFS</sequence>
<protein>
    <recommendedName>
        <fullName evidence="6">5-OH-xanthotoxin synthase</fullName>
        <ecNumber evidence="5">1.14.14.-</ecNumber>
    </recommendedName>
    <alternativeName>
        <fullName evidence="6">Cytochrome P450 CYP71AZ1</fullName>
    </alternativeName>
</protein>
<dbReference type="EC" id="1.14.14.-" evidence="5"/>
<dbReference type="EMBL" id="EF127863">
    <property type="protein sequence ID" value="ABO32529.1"/>
    <property type="molecule type" value="Genomic_DNA"/>
</dbReference>
<dbReference type="SMR" id="D2CGS0"/>
<dbReference type="GO" id="GO:0005783">
    <property type="term" value="C:endoplasmic reticulum"/>
    <property type="evidence" value="ECO:0007669"/>
    <property type="project" value="UniProtKB-KW"/>
</dbReference>
<dbReference type="GO" id="GO:0016020">
    <property type="term" value="C:membrane"/>
    <property type="evidence" value="ECO:0007669"/>
    <property type="project" value="UniProtKB-KW"/>
</dbReference>
<dbReference type="GO" id="GO:0020037">
    <property type="term" value="F:heme binding"/>
    <property type="evidence" value="ECO:0007669"/>
    <property type="project" value="InterPro"/>
</dbReference>
<dbReference type="GO" id="GO:0005506">
    <property type="term" value="F:iron ion binding"/>
    <property type="evidence" value="ECO:0007669"/>
    <property type="project" value="InterPro"/>
</dbReference>
<dbReference type="GO" id="GO:0004497">
    <property type="term" value="F:monooxygenase activity"/>
    <property type="evidence" value="ECO:0007669"/>
    <property type="project" value="UniProtKB-KW"/>
</dbReference>
<dbReference type="GO" id="GO:0016705">
    <property type="term" value="F:oxidoreductase activity, acting on paired donors, with incorporation or reduction of molecular oxygen"/>
    <property type="evidence" value="ECO:0007669"/>
    <property type="project" value="InterPro"/>
</dbReference>
<dbReference type="GO" id="GO:0009805">
    <property type="term" value="P:coumarin biosynthetic process"/>
    <property type="evidence" value="ECO:0000314"/>
    <property type="project" value="UniProtKB"/>
</dbReference>
<dbReference type="CDD" id="cd11072">
    <property type="entry name" value="CYP71-like"/>
    <property type="match status" value="1"/>
</dbReference>
<dbReference type="FunFam" id="1.10.630.10:FF:000011">
    <property type="entry name" value="Cytochrome P450 83B1"/>
    <property type="match status" value="1"/>
</dbReference>
<dbReference type="Gene3D" id="1.10.630.10">
    <property type="entry name" value="Cytochrome P450"/>
    <property type="match status" value="1"/>
</dbReference>
<dbReference type="InterPro" id="IPR001128">
    <property type="entry name" value="Cyt_P450"/>
</dbReference>
<dbReference type="InterPro" id="IPR017972">
    <property type="entry name" value="Cyt_P450_CS"/>
</dbReference>
<dbReference type="InterPro" id="IPR002401">
    <property type="entry name" value="Cyt_P450_E_grp-I"/>
</dbReference>
<dbReference type="InterPro" id="IPR036396">
    <property type="entry name" value="Cyt_P450_sf"/>
</dbReference>
<dbReference type="PANTHER" id="PTHR47955:SF22">
    <property type="entry name" value="CYTOCHROME P450 83B1-LIKE"/>
    <property type="match status" value="1"/>
</dbReference>
<dbReference type="PANTHER" id="PTHR47955">
    <property type="entry name" value="CYTOCHROME P450 FAMILY 71 PROTEIN"/>
    <property type="match status" value="1"/>
</dbReference>
<dbReference type="Pfam" id="PF00067">
    <property type="entry name" value="p450"/>
    <property type="match status" value="1"/>
</dbReference>
<dbReference type="PRINTS" id="PR00463">
    <property type="entry name" value="EP450I"/>
</dbReference>
<dbReference type="PRINTS" id="PR00385">
    <property type="entry name" value="P450"/>
</dbReference>
<dbReference type="SUPFAM" id="SSF48264">
    <property type="entry name" value="Cytochrome P450"/>
    <property type="match status" value="1"/>
</dbReference>
<dbReference type="PROSITE" id="PS00086">
    <property type="entry name" value="CYTOCHROME_P450"/>
    <property type="match status" value="1"/>
</dbReference>
<evidence type="ECO:0000250" key="1">
    <source>
        <dbReference type="UniProtKB" id="A0A2Z5D850"/>
    </source>
</evidence>
<evidence type="ECO:0000250" key="2">
    <source>
        <dbReference type="UniProtKB" id="Q6QNI4"/>
    </source>
</evidence>
<evidence type="ECO:0000250" key="3">
    <source>
        <dbReference type="UniProtKB" id="Q94IP1"/>
    </source>
</evidence>
<evidence type="ECO:0000255" key="4"/>
<evidence type="ECO:0000269" key="5">
    <source>
    </source>
</evidence>
<evidence type="ECO:0000303" key="6">
    <source>
    </source>
</evidence>
<evidence type="ECO:0000305" key="7"/>
<feature type="chain" id="PRO_0000454522" description="5-OH-xanthotoxin synthase">
    <location>
        <begin position="1"/>
        <end position="509"/>
    </location>
</feature>
<feature type="transmembrane region" description="Helical" evidence="4">
    <location>
        <begin position="5"/>
        <end position="25"/>
    </location>
</feature>
<feature type="region of interest" description="Substrate specificity" evidence="1">
    <location>
        <begin position="368"/>
        <end position="373"/>
    </location>
</feature>
<feature type="binding site" description="axial binding residue" evidence="3">
    <location>
        <position position="449"/>
    </location>
    <ligand>
        <name>heme</name>
        <dbReference type="ChEBI" id="CHEBI:30413"/>
    </ligand>
    <ligandPart>
        <name>Fe</name>
        <dbReference type="ChEBI" id="CHEBI:18248"/>
    </ligandPart>
</feature>
<feature type="site" description="Substrate specificity" evidence="1">
    <location>
        <position position="120"/>
    </location>
</feature>
<feature type="site" description="Substrate specificity" evidence="1">
    <location>
        <position position="304"/>
    </location>
</feature>
<feature type="site" description="Substrate specificity" evidence="1">
    <location>
        <position position="308"/>
    </location>
</feature>
<gene>
    <name evidence="6" type="primary">CYP71AZ1</name>
</gene>
<organism>
    <name type="scientific">Ammi majus</name>
    <name type="common">Bishop's weed</name>
    <dbReference type="NCBI Taxonomy" id="48026"/>
    <lineage>
        <taxon>Eukaryota</taxon>
        <taxon>Viridiplantae</taxon>
        <taxon>Streptophyta</taxon>
        <taxon>Embryophyta</taxon>
        <taxon>Tracheophyta</taxon>
        <taxon>Spermatophyta</taxon>
        <taxon>Magnoliopsida</taxon>
        <taxon>eudicotyledons</taxon>
        <taxon>Gunneridae</taxon>
        <taxon>Pentapetalae</taxon>
        <taxon>asterids</taxon>
        <taxon>campanulids</taxon>
        <taxon>Apiales</taxon>
        <taxon>Apiaceae</taxon>
        <taxon>Apioideae</taxon>
        <taxon>apioid superclade</taxon>
        <taxon>Apieae</taxon>
        <taxon>Ammi</taxon>
    </lineage>
</organism>
<proteinExistence type="evidence at protein level"/>
<accession>D2CGS0</accession>
<name>C71Z1_AMMMJ</name>
<comment type="function">
    <text evidence="5 6">Involved in the biosynthesis of coumarins and furanocoumarins (FCs), natural products required for defense responses against attacks by predators with potential medical and agroindustrial usages such as anticoagulant, rodenticide and artificial vanilla substitutes (PubMed:29971079). Catalyzes the conversion of xanthotoxin into 5-hydroxyxanthotoxin (PubMed:29971079).</text>
</comment>
<comment type="catalytic activity">
    <reaction evidence="5">
        <text>xanthotoxin + reduced [NADPH--hemoprotein reductase] + O2 = 5-hydroxyxanthotoxin + oxidized [NADPH--hemoprotein reductase] + H2O + 2 H(+)</text>
        <dbReference type="Rhea" id="RHEA:58064"/>
        <dbReference type="Rhea" id="RHEA-COMP:11964"/>
        <dbReference type="Rhea" id="RHEA-COMP:11965"/>
        <dbReference type="ChEBI" id="CHEBI:15377"/>
        <dbReference type="ChEBI" id="CHEBI:15378"/>
        <dbReference type="ChEBI" id="CHEBI:15379"/>
        <dbReference type="ChEBI" id="CHEBI:18358"/>
        <dbReference type="ChEBI" id="CHEBI:57618"/>
        <dbReference type="ChEBI" id="CHEBI:58210"/>
        <dbReference type="ChEBI" id="CHEBI:78326"/>
    </reaction>
    <physiologicalReaction direction="left-to-right" evidence="5">
        <dbReference type="Rhea" id="RHEA:58065"/>
    </physiologicalReaction>
</comment>
<comment type="cofactor">
    <cofactor evidence="3">
        <name>heme</name>
        <dbReference type="ChEBI" id="CHEBI:30413"/>
    </cofactor>
</comment>
<comment type="biophysicochemical properties">
    <kinetics>
        <KM evidence="5">13.1 uM for xanthotoxin (at pH 7.4 and 28 degrees Celsius)</KM>
    </kinetics>
</comment>
<comment type="pathway">
    <text evidence="5">Secondary metabolite biosynthesis.</text>
</comment>
<comment type="subcellular location">
    <subcellularLocation>
        <location evidence="2">Microsome membrane</location>
        <topology evidence="4">Single-pass membrane protein</topology>
    </subcellularLocation>
</comment>
<comment type="similarity">
    <text evidence="7">Belongs to the cytochrome P450 family.</text>
</comment>
<keyword id="KW-0256">Endoplasmic reticulum</keyword>
<keyword id="KW-0349">Heme</keyword>
<keyword id="KW-0408">Iron</keyword>
<keyword id="KW-0472">Membrane</keyword>
<keyword id="KW-0479">Metal-binding</keyword>
<keyword id="KW-0492">Microsome</keyword>
<keyword id="KW-0503">Monooxygenase</keyword>
<keyword id="KW-0560">Oxidoreductase</keyword>
<keyword id="KW-0812">Transmembrane</keyword>
<keyword id="KW-1133">Transmembrane helix</keyword>